<protein>
    <recommendedName>
        <fullName evidence="12">WW domain-containing transcription regulator protein 1</fullName>
    </recommendedName>
    <alternativeName>
        <fullName evidence="13">Transcriptional coactivator with PDZ-binding motif</fullName>
    </alternativeName>
</protein>
<organism>
    <name type="scientific">Mus musculus</name>
    <name type="common">Mouse</name>
    <dbReference type="NCBI Taxonomy" id="10090"/>
    <lineage>
        <taxon>Eukaryota</taxon>
        <taxon>Metazoa</taxon>
        <taxon>Chordata</taxon>
        <taxon>Craniata</taxon>
        <taxon>Vertebrata</taxon>
        <taxon>Euteleostomi</taxon>
        <taxon>Mammalia</taxon>
        <taxon>Eutheria</taxon>
        <taxon>Euarchontoglires</taxon>
        <taxon>Glires</taxon>
        <taxon>Rodentia</taxon>
        <taxon>Myomorpha</taxon>
        <taxon>Muroidea</taxon>
        <taxon>Muridae</taxon>
        <taxon>Murinae</taxon>
        <taxon>Mus</taxon>
        <taxon>Mus</taxon>
    </lineage>
</organism>
<sequence length="395" mass="43620">MNPSSVPHPLPPPGQQVIHVTQDLDTDLEALFNSVMNPKPSSWRKKILPESFFKEPDSGSHSRQSSTDSSGGHPGPRLAGGAQHVRSHSSPASLQLGTGAGAAGGPAQQHAHLRQQSYDVTDELPLPPGWEMTFTATGQRYFLNHIEKITTWQDPRKVMNQPLNHVNLHPSITSTSVPQRSMAVSQPNLAMNHQHQQVVATSLSPQNHPTQNQPTGLMSVPNALTTQQQQQQKLRLQRIQMERERIRMRQEELMRQEAALCRQLPMETETMAPVNTPAMSTDMRSVTNSSSDPFLNGGPYHSREQSTDSGLGLGCYSVPTTPEDFLSNMDEMDTGENSGQTPMTVNPQQTRFPDFLDCLPGTNVDLGTLESEDLIPLFNDVESALNKSEPFLTWL</sequence>
<gene>
    <name evidence="13" type="primary">Wwtr1</name>
    <name evidence="10" type="synonym">Taz</name>
</gene>
<accession>Q9EPK5</accession>
<accession>Q3UQ69</accession>
<accession>Q3UQM0</accession>
<accession>Q99KI4</accession>
<name>WWTR1_MOUSE</name>
<feature type="chain" id="PRO_0000076070" description="WW domain-containing transcription regulator protein 1">
    <location>
        <begin position="1"/>
        <end position="395"/>
    </location>
</feature>
<feature type="domain" description="WW" evidence="5">
    <location>
        <begin position="124"/>
        <end position="157"/>
    </location>
</feature>
<feature type="region of interest" description="Disordered" evidence="6">
    <location>
        <begin position="52"/>
        <end position="116"/>
    </location>
</feature>
<feature type="region of interest" description="Required for interaction with PALS1" evidence="3">
    <location>
        <begin position="221"/>
        <end position="395"/>
    </location>
</feature>
<feature type="region of interest" description="Disordered" evidence="6">
    <location>
        <begin position="277"/>
        <end position="308"/>
    </location>
</feature>
<feature type="coiled-coil region" evidence="4">
    <location>
        <begin position="224"/>
        <end position="258"/>
    </location>
</feature>
<feature type="short sequence motif" description="PDZ-binding" evidence="1">
    <location>
        <begin position="389"/>
        <end position="395"/>
    </location>
</feature>
<feature type="compositionally biased region" description="Polar residues" evidence="6">
    <location>
        <begin position="61"/>
        <end position="70"/>
    </location>
</feature>
<feature type="compositionally biased region" description="Polar residues" evidence="6">
    <location>
        <begin position="277"/>
        <end position="293"/>
    </location>
</feature>
<feature type="modified residue" description="Phosphoserine" evidence="3">
    <location>
        <position position="62"/>
    </location>
</feature>
<feature type="modified residue" description="Phosphoserine; by LATS2" evidence="14">
    <location>
        <position position="89"/>
    </location>
</feature>
<feature type="modified residue" description="Phosphoserine" evidence="3">
    <location>
        <position position="290"/>
    </location>
</feature>
<feature type="modified residue" description="Phosphoserine; by LATS2" evidence="3">
    <location>
        <position position="306"/>
    </location>
</feature>
<feature type="cross-link" description="Glycyl lysine isopeptide (Lys-Gly) (interchain with G-Cter in ubiquitin)" evidence="9">
    <location>
        <position position="46"/>
    </location>
</feature>
<feature type="splice variant" id="VSP_026137" description="In isoform 2." evidence="11">
    <original>M</original>
    <variation>MHNSTAPLSARLFPKGGSLLQTLFMGQSGSRGGCARLRLLCRLLAQWERPRPVPGIKM</variation>
    <location>
        <position position="1"/>
    </location>
</feature>
<feature type="mutagenesis site" description="Loss of YWHAZ binding with increased nuclear localization. Partial recovery of nuclear accumulation; when associated with deletion of 392-L--L-395." evidence="7">
    <original>S</original>
    <variation>A</variation>
    <location>
        <position position="89"/>
    </location>
</feature>
<feature type="mutagenesis site" description="Loss of SLC9A3R2 binding and reduced nuclear localization. Partial recovery of nuclear accumulation; when associated with A-89." evidence="7">
    <location>
        <begin position="392"/>
        <end position="395"/>
    </location>
</feature>
<feature type="sequence conflict" description="In Ref. 1; CAC17733." evidence="12" ref="1">
    <original>A</original>
    <variation>V</variation>
    <location>
        <position position="384"/>
    </location>
</feature>
<feature type="helix" evidence="15">
    <location>
        <begin position="29"/>
        <end position="31"/>
    </location>
</feature>
<feature type="helix" evidence="15">
    <location>
        <begin position="43"/>
        <end position="45"/>
    </location>
</feature>
<feature type="helix" evidence="15">
    <location>
        <begin position="50"/>
        <end position="52"/>
    </location>
</feature>
<dbReference type="EMBL" id="AJ299430">
    <property type="protein sequence ID" value="CAC17733.1"/>
    <property type="molecule type" value="mRNA"/>
</dbReference>
<dbReference type="EMBL" id="AK142299">
    <property type="protein sequence ID" value="BAE25019.1"/>
    <property type="molecule type" value="mRNA"/>
</dbReference>
<dbReference type="EMBL" id="AK142720">
    <property type="protein sequence ID" value="BAE25174.1"/>
    <property type="molecule type" value="mRNA"/>
</dbReference>
<dbReference type="EMBL" id="BC004640">
    <property type="protein sequence ID" value="AAH04640.1"/>
    <property type="molecule type" value="mRNA"/>
</dbReference>
<dbReference type="EMBL" id="BC014727">
    <property type="protein sequence ID" value="AAH14727.1"/>
    <property type="molecule type" value="mRNA"/>
</dbReference>
<dbReference type="CCDS" id="CCDS38434.1">
    <molecule id="Q9EPK5-1"/>
</dbReference>
<dbReference type="CCDS" id="CCDS50912.1">
    <molecule id="Q9EPK5-2"/>
</dbReference>
<dbReference type="RefSeq" id="NP_001161753.1">
    <molecule id="Q9EPK5-2"/>
    <property type="nucleotide sequence ID" value="NM_001168281.1"/>
</dbReference>
<dbReference type="RefSeq" id="NP_598545.2">
    <molecule id="Q9EPK5-1"/>
    <property type="nucleotide sequence ID" value="NM_133784.3"/>
</dbReference>
<dbReference type="PDB" id="5GN0">
    <property type="method" value="X-ray"/>
    <property type="resolution" value="2.90 A"/>
    <property type="chains" value="E/F/G/H=24-57"/>
</dbReference>
<dbReference type="PDBsum" id="5GN0"/>
<dbReference type="SMR" id="Q9EPK5"/>
<dbReference type="BioGRID" id="220584">
    <property type="interactions" value="65"/>
</dbReference>
<dbReference type="CORUM" id="Q9EPK5"/>
<dbReference type="DIP" id="DIP-39476N"/>
<dbReference type="ELM" id="Q9EPK5"/>
<dbReference type="FunCoup" id="Q9EPK5">
    <property type="interactions" value="1538"/>
</dbReference>
<dbReference type="IntAct" id="Q9EPK5">
    <property type="interactions" value="24"/>
</dbReference>
<dbReference type="MINT" id="Q9EPK5"/>
<dbReference type="STRING" id="10090.ENSMUSP00000113040"/>
<dbReference type="GlyGen" id="Q9EPK5">
    <property type="glycosylation" value="2 sites, 1 O-linked glycan (2 sites)"/>
</dbReference>
<dbReference type="iPTMnet" id="Q9EPK5"/>
<dbReference type="PhosphoSitePlus" id="Q9EPK5"/>
<dbReference type="PaxDb" id="10090-ENSMUSP00000113040"/>
<dbReference type="PeptideAtlas" id="Q9EPK5"/>
<dbReference type="ProteomicsDB" id="299777">
    <molecule id="Q9EPK5-1"/>
</dbReference>
<dbReference type="ProteomicsDB" id="299778">
    <molecule id="Q9EPK5-2"/>
</dbReference>
<dbReference type="Pumba" id="Q9EPK5"/>
<dbReference type="Antibodypedia" id="1743">
    <property type="antibodies" value="381 antibodies from 36 providers"/>
</dbReference>
<dbReference type="DNASU" id="97064"/>
<dbReference type="Ensembl" id="ENSMUST00000029380.14">
    <molecule id="Q9EPK5-1"/>
    <property type="protein sequence ID" value="ENSMUSP00000029380.8"/>
    <property type="gene ID" value="ENSMUSG00000027803.15"/>
</dbReference>
<dbReference type="Ensembl" id="ENSMUST00000120977.2">
    <molecule id="Q9EPK5-2"/>
    <property type="protein sequence ID" value="ENSMUSP00000113040.2"/>
    <property type="gene ID" value="ENSMUSG00000027803.15"/>
</dbReference>
<dbReference type="GeneID" id="97064"/>
<dbReference type="KEGG" id="mmu:97064"/>
<dbReference type="UCSC" id="uc008phb.2">
    <molecule id="Q9EPK5-1"/>
    <property type="organism name" value="mouse"/>
</dbReference>
<dbReference type="UCSC" id="uc012cpt.1">
    <molecule id="Q9EPK5-2"/>
    <property type="organism name" value="mouse"/>
</dbReference>
<dbReference type="AGR" id="MGI:1917649"/>
<dbReference type="CTD" id="25937"/>
<dbReference type="MGI" id="MGI:1917649">
    <property type="gene designation" value="Wwtr1"/>
</dbReference>
<dbReference type="VEuPathDB" id="HostDB:ENSMUSG00000027803"/>
<dbReference type="eggNOG" id="KOG0940">
    <property type="taxonomic scope" value="Eukaryota"/>
</dbReference>
<dbReference type="GeneTree" id="ENSGT00510000046760"/>
<dbReference type="HOGENOM" id="CLU_041917_0_0_1"/>
<dbReference type="InParanoid" id="Q9EPK5"/>
<dbReference type="OMA" id="NQPLNPM"/>
<dbReference type="OrthoDB" id="84774at9989"/>
<dbReference type="PhylomeDB" id="Q9EPK5"/>
<dbReference type="TreeFam" id="TF326941"/>
<dbReference type="Reactome" id="R-MMU-2028269">
    <property type="pathway name" value="Signaling by Hippo"/>
</dbReference>
<dbReference type="Reactome" id="R-MMU-2032785">
    <property type="pathway name" value="YAP1- and WWTR1 (TAZ)-stimulated gene expression"/>
</dbReference>
<dbReference type="Reactome" id="R-MMU-2173796">
    <property type="pathway name" value="SMAD2/SMAD3:SMAD4 heterotrimer regulates transcription"/>
</dbReference>
<dbReference type="BioGRID-ORCS" id="97064">
    <property type="hits" value="10 hits in 80 CRISPR screens"/>
</dbReference>
<dbReference type="ChiTaRS" id="Wwtr1">
    <property type="organism name" value="mouse"/>
</dbReference>
<dbReference type="PRO" id="PR:Q9EPK5"/>
<dbReference type="Proteomes" id="UP000000589">
    <property type="component" value="Chromosome 3"/>
</dbReference>
<dbReference type="RNAct" id="Q9EPK5">
    <property type="molecule type" value="protein"/>
</dbReference>
<dbReference type="Bgee" id="ENSMUSG00000027803">
    <property type="expression patterns" value="Expressed in left lung lobe and 254 other cell types or tissues"/>
</dbReference>
<dbReference type="GO" id="GO:0005923">
    <property type="term" value="C:bicellular tight junction"/>
    <property type="evidence" value="ECO:0007669"/>
    <property type="project" value="UniProtKB-SubCell"/>
</dbReference>
<dbReference type="GO" id="GO:0005737">
    <property type="term" value="C:cytoplasm"/>
    <property type="evidence" value="ECO:0000314"/>
    <property type="project" value="MGI"/>
</dbReference>
<dbReference type="GO" id="GO:0005829">
    <property type="term" value="C:cytosol"/>
    <property type="evidence" value="ECO:0007669"/>
    <property type="project" value="Ensembl"/>
</dbReference>
<dbReference type="GO" id="GO:0016604">
    <property type="term" value="C:nuclear body"/>
    <property type="evidence" value="ECO:0007669"/>
    <property type="project" value="Ensembl"/>
</dbReference>
<dbReference type="GO" id="GO:0005654">
    <property type="term" value="C:nucleoplasm"/>
    <property type="evidence" value="ECO:0000304"/>
    <property type="project" value="Reactome"/>
</dbReference>
<dbReference type="GO" id="GO:0005634">
    <property type="term" value="C:nucleus"/>
    <property type="evidence" value="ECO:0000314"/>
    <property type="project" value="UniProtKB"/>
</dbReference>
<dbReference type="GO" id="GO:0005886">
    <property type="term" value="C:plasma membrane"/>
    <property type="evidence" value="ECO:0007669"/>
    <property type="project" value="UniProtKB-SubCell"/>
</dbReference>
<dbReference type="GO" id="GO:0005667">
    <property type="term" value="C:transcription regulator complex"/>
    <property type="evidence" value="ECO:0000314"/>
    <property type="project" value="MGI"/>
</dbReference>
<dbReference type="GO" id="GO:0042803">
    <property type="term" value="F:protein homodimerization activity"/>
    <property type="evidence" value="ECO:0000314"/>
    <property type="project" value="UniProtKB"/>
</dbReference>
<dbReference type="GO" id="GO:0003713">
    <property type="term" value="F:transcription coactivator activity"/>
    <property type="evidence" value="ECO:0000314"/>
    <property type="project" value="UniProtKB"/>
</dbReference>
<dbReference type="GO" id="GO:0003714">
    <property type="term" value="F:transcription corepressor activity"/>
    <property type="evidence" value="ECO:0000316"/>
    <property type="project" value="MGI"/>
</dbReference>
<dbReference type="GO" id="GO:0060271">
    <property type="term" value="P:cilium assembly"/>
    <property type="evidence" value="ECO:0000315"/>
    <property type="project" value="MGI"/>
</dbReference>
<dbReference type="GO" id="GO:0032835">
    <property type="term" value="P:glomerulus development"/>
    <property type="evidence" value="ECO:0000315"/>
    <property type="project" value="MGI"/>
</dbReference>
<dbReference type="GO" id="GO:0003015">
    <property type="term" value="P:heart process"/>
    <property type="evidence" value="ECO:0000315"/>
    <property type="project" value="ARUK-UCL"/>
</dbReference>
<dbReference type="GO" id="GO:0035329">
    <property type="term" value="P:hippo signaling"/>
    <property type="evidence" value="ECO:0007669"/>
    <property type="project" value="Ensembl"/>
</dbReference>
<dbReference type="GO" id="GO:0060993">
    <property type="term" value="P:kidney morphogenesis"/>
    <property type="evidence" value="ECO:0000315"/>
    <property type="project" value="MGI"/>
</dbReference>
<dbReference type="GO" id="GO:0048762">
    <property type="term" value="P:mesenchymal cell differentiation"/>
    <property type="evidence" value="ECO:0000315"/>
    <property type="project" value="MGI"/>
</dbReference>
<dbReference type="GO" id="GO:0035264">
    <property type="term" value="P:multicellular organism growth"/>
    <property type="evidence" value="ECO:0000315"/>
    <property type="project" value="MGI"/>
</dbReference>
<dbReference type="GO" id="GO:0090090">
    <property type="term" value="P:negative regulation of canonical Wnt signaling pathway"/>
    <property type="evidence" value="ECO:0007669"/>
    <property type="project" value="Ensembl"/>
</dbReference>
<dbReference type="GO" id="GO:0045599">
    <property type="term" value="P:negative regulation of fat cell differentiation"/>
    <property type="evidence" value="ECO:0000316"/>
    <property type="project" value="MGI"/>
</dbReference>
<dbReference type="GO" id="GO:0000122">
    <property type="term" value="P:negative regulation of transcription by RNA polymerase II"/>
    <property type="evidence" value="ECO:0000316"/>
    <property type="project" value="MGI"/>
</dbReference>
<dbReference type="GO" id="GO:0001649">
    <property type="term" value="P:osteoblast differentiation"/>
    <property type="evidence" value="ECO:0000315"/>
    <property type="project" value="MGI"/>
</dbReference>
<dbReference type="GO" id="GO:0008284">
    <property type="term" value="P:positive regulation of cell population proliferation"/>
    <property type="evidence" value="ECO:0007669"/>
    <property type="project" value="Ensembl"/>
</dbReference>
<dbReference type="GO" id="GO:0010718">
    <property type="term" value="P:positive regulation of epithelial to mesenchymal transition"/>
    <property type="evidence" value="ECO:0007669"/>
    <property type="project" value="Ensembl"/>
</dbReference>
<dbReference type="GO" id="GO:0045669">
    <property type="term" value="P:positive regulation of osteoblast differentiation"/>
    <property type="evidence" value="ECO:0007669"/>
    <property type="project" value="Ensembl"/>
</dbReference>
<dbReference type="GO" id="GO:1900182">
    <property type="term" value="P:positive regulation of protein localization to nucleus"/>
    <property type="evidence" value="ECO:0000315"/>
    <property type="project" value="UniProtKB"/>
</dbReference>
<dbReference type="GO" id="GO:0045944">
    <property type="term" value="P:positive regulation of transcription by RNA polymerase II"/>
    <property type="evidence" value="ECO:0000314"/>
    <property type="project" value="MGI"/>
</dbReference>
<dbReference type="GO" id="GO:0016567">
    <property type="term" value="P:protein ubiquitination"/>
    <property type="evidence" value="ECO:0000314"/>
    <property type="project" value="MGI"/>
</dbReference>
<dbReference type="GO" id="GO:0060828">
    <property type="term" value="P:regulation of canonical Wnt signaling pathway"/>
    <property type="evidence" value="ECO:0000316"/>
    <property type="project" value="MGI"/>
</dbReference>
<dbReference type="GO" id="GO:0006355">
    <property type="term" value="P:regulation of DNA-templated transcription"/>
    <property type="evidence" value="ECO:0000314"/>
    <property type="project" value="MGI"/>
</dbReference>
<dbReference type="GO" id="GO:0072307">
    <property type="term" value="P:regulation of metanephric nephron tubule epithelial cell differentiation"/>
    <property type="evidence" value="ECO:0000316"/>
    <property type="project" value="MGI"/>
</dbReference>
<dbReference type="GO" id="GO:0031146">
    <property type="term" value="P:SCF-dependent proteasomal ubiquitin-dependent protein catabolic process"/>
    <property type="evidence" value="ECO:0000315"/>
    <property type="project" value="MGI"/>
</dbReference>
<dbReference type="GO" id="GO:0060395">
    <property type="term" value="P:SMAD protein signal transduction"/>
    <property type="evidence" value="ECO:0007669"/>
    <property type="project" value="Ensembl"/>
</dbReference>
<dbReference type="GO" id="GO:0017145">
    <property type="term" value="P:stem cell division"/>
    <property type="evidence" value="ECO:0007669"/>
    <property type="project" value="Ensembl"/>
</dbReference>
<dbReference type="GO" id="GO:0001894">
    <property type="term" value="P:tissue homeostasis"/>
    <property type="evidence" value="ECO:0000315"/>
    <property type="project" value="ARUK-UCL"/>
</dbReference>
<dbReference type="CDD" id="cd00201">
    <property type="entry name" value="WW"/>
    <property type="match status" value="1"/>
</dbReference>
<dbReference type="FunFam" id="2.20.70.10:FF:000012">
    <property type="entry name" value="transcriptional coactivator YAP1 isoform X2"/>
    <property type="match status" value="1"/>
</dbReference>
<dbReference type="Gene3D" id="2.20.70.10">
    <property type="match status" value="1"/>
</dbReference>
<dbReference type="Gene3D" id="6.20.430.10">
    <property type="match status" value="1"/>
</dbReference>
<dbReference type="InterPro" id="IPR001202">
    <property type="entry name" value="WW_dom"/>
</dbReference>
<dbReference type="InterPro" id="IPR036020">
    <property type="entry name" value="WW_dom_sf"/>
</dbReference>
<dbReference type="InterPro" id="IPR051583">
    <property type="entry name" value="YAP1"/>
</dbReference>
<dbReference type="PANTHER" id="PTHR17616:SF6">
    <property type="entry name" value="WW DOMAIN-CONTAINING TRANSCRIPTION REGULATOR PROTEIN 1"/>
    <property type="match status" value="1"/>
</dbReference>
<dbReference type="PANTHER" id="PTHR17616">
    <property type="entry name" value="YES-ASSOCIATED PROTEIN YAP1 FAMILY MEMBER"/>
    <property type="match status" value="1"/>
</dbReference>
<dbReference type="Pfam" id="PF00397">
    <property type="entry name" value="WW"/>
    <property type="match status" value="1"/>
</dbReference>
<dbReference type="SMART" id="SM00456">
    <property type="entry name" value="WW"/>
    <property type="match status" value="1"/>
</dbReference>
<dbReference type="SUPFAM" id="SSF51045">
    <property type="entry name" value="WW domain"/>
    <property type="match status" value="1"/>
</dbReference>
<dbReference type="PROSITE" id="PS01159">
    <property type="entry name" value="WW_DOMAIN_1"/>
    <property type="match status" value="1"/>
</dbReference>
<dbReference type="PROSITE" id="PS50020">
    <property type="entry name" value="WW_DOMAIN_2"/>
    <property type="match status" value="1"/>
</dbReference>
<proteinExistence type="evidence at protein level"/>
<keyword id="KW-0002">3D-structure</keyword>
<keyword id="KW-0010">Activator</keyword>
<keyword id="KW-0025">Alternative splicing</keyword>
<keyword id="KW-0965">Cell junction</keyword>
<keyword id="KW-1003">Cell membrane</keyword>
<keyword id="KW-0175">Coiled coil</keyword>
<keyword id="KW-0963">Cytoplasm</keyword>
<keyword id="KW-1017">Isopeptide bond</keyword>
<keyword id="KW-0472">Membrane</keyword>
<keyword id="KW-0539">Nucleus</keyword>
<keyword id="KW-0597">Phosphoprotein</keyword>
<keyword id="KW-1185">Reference proteome</keyword>
<keyword id="KW-0796">Tight junction</keyword>
<keyword id="KW-0804">Transcription</keyword>
<keyword id="KW-0805">Transcription regulation</keyword>
<keyword id="KW-0832">Ubl conjugation</keyword>
<reference key="1">
    <citation type="journal article" date="2000" name="EMBO J.">
        <title>TAZ: a novel transcriptional co-activator regulated by interactions with 14-3-3 and PDZ domain proteins.</title>
        <authorList>
            <person name="Kanai F."/>
            <person name="Marignani P.A."/>
            <person name="Sarbassova D."/>
            <person name="Yagi R."/>
            <person name="Hall R.A."/>
            <person name="Donowitz M."/>
            <person name="Hisaminato A."/>
            <person name="Fujiwara T."/>
            <person name="Ito Y."/>
            <person name="Cantley L.C."/>
            <person name="Yaffe M.B."/>
        </authorList>
    </citation>
    <scope>NUCLEOTIDE SEQUENCE [MRNA] (ISOFORM 1)</scope>
    <scope>FUNCTION</scope>
    <scope>INTERACTION WITH SLC9A3R2 AND YWHAZ</scope>
    <scope>SUBCELLULAR LOCATION</scope>
    <scope>TISSUE SPECIFICITY</scope>
    <scope>DOMAIN</scope>
    <scope>PHOSPHORYLATION AT SER-89</scope>
    <scope>MUTAGENESIS OF SER-89 AND 392-GLU--LEU-395</scope>
</reference>
<reference key="2">
    <citation type="journal article" date="2005" name="Science">
        <title>The transcriptional landscape of the mammalian genome.</title>
        <authorList>
            <person name="Carninci P."/>
            <person name="Kasukawa T."/>
            <person name="Katayama S."/>
            <person name="Gough J."/>
            <person name="Frith M.C."/>
            <person name="Maeda N."/>
            <person name="Oyama R."/>
            <person name="Ravasi T."/>
            <person name="Lenhard B."/>
            <person name="Wells C."/>
            <person name="Kodzius R."/>
            <person name="Shimokawa K."/>
            <person name="Bajic V.B."/>
            <person name="Brenner S.E."/>
            <person name="Batalov S."/>
            <person name="Forrest A.R."/>
            <person name="Zavolan M."/>
            <person name="Davis M.J."/>
            <person name="Wilming L.G."/>
            <person name="Aidinis V."/>
            <person name="Allen J.E."/>
            <person name="Ambesi-Impiombato A."/>
            <person name="Apweiler R."/>
            <person name="Aturaliya R.N."/>
            <person name="Bailey T.L."/>
            <person name="Bansal M."/>
            <person name="Baxter L."/>
            <person name="Beisel K.W."/>
            <person name="Bersano T."/>
            <person name="Bono H."/>
            <person name="Chalk A.M."/>
            <person name="Chiu K.P."/>
            <person name="Choudhary V."/>
            <person name="Christoffels A."/>
            <person name="Clutterbuck D.R."/>
            <person name="Crowe M.L."/>
            <person name="Dalla E."/>
            <person name="Dalrymple B.P."/>
            <person name="de Bono B."/>
            <person name="Della Gatta G."/>
            <person name="di Bernardo D."/>
            <person name="Down T."/>
            <person name="Engstrom P."/>
            <person name="Fagiolini M."/>
            <person name="Faulkner G."/>
            <person name="Fletcher C.F."/>
            <person name="Fukushima T."/>
            <person name="Furuno M."/>
            <person name="Futaki S."/>
            <person name="Gariboldi M."/>
            <person name="Georgii-Hemming P."/>
            <person name="Gingeras T.R."/>
            <person name="Gojobori T."/>
            <person name="Green R.E."/>
            <person name="Gustincich S."/>
            <person name="Harbers M."/>
            <person name="Hayashi Y."/>
            <person name="Hensch T.K."/>
            <person name="Hirokawa N."/>
            <person name="Hill D."/>
            <person name="Huminiecki L."/>
            <person name="Iacono M."/>
            <person name="Ikeo K."/>
            <person name="Iwama A."/>
            <person name="Ishikawa T."/>
            <person name="Jakt M."/>
            <person name="Kanapin A."/>
            <person name="Katoh M."/>
            <person name="Kawasawa Y."/>
            <person name="Kelso J."/>
            <person name="Kitamura H."/>
            <person name="Kitano H."/>
            <person name="Kollias G."/>
            <person name="Krishnan S.P."/>
            <person name="Kruger A."/>
            <person name="Kummerfeld S.K."/>
            <person name="Kurochkin I.V."/>
            <person name="Lareau L.F."/>
            <person name="Lazarevic D."/>
            <person name="Lipovich L."/>
            <person name="Liu J."/>
            <person name="Liuni S."/>
            <person name="McWilliam S."/>
            <person name="Madan Babu M."/>
            <person name="Madera M."/>
            <person name="Marchionni L."/>
            <person name="Matsuda H."/>
            <person name="Matsuzawa S."/>
            <person name="Miki H."/>
            <person name="Mignone F."/>
            <person name="Miyake S."/>
            <person name="Morris K."/>
            <person name="Mottagui-Tabar S."/>
            <person name="Mulder N."/>
            <person name="Nakano N."/>
            <person name="Nakauchi H."/>
            <person name="Ng P."/>
            <person name="Nilsson R."/>
            <person name="Nishiguchi S."/>
            <person name="Nishikawa S."/>
            <person name="Nori F."/>
            <person name="Ohara O."/>
            <person name="Okazaki Y."/>
            <person name="Orlando V."/>
            <person name="Pang K.C."/>
            <person name="Pavan W.J."/>
            <person name="Pavesi G."/>
            <person name="Pesole G."/>
            <person name="Petrovsky N."/>
            <person name="Piazza S."/>
            <person name="Reed J."/>
            <person name="Reid J.F."/>
            <person name="Ring B.Z."/>
            <person name="Ringwald M."/>
            <person name="Rost B."/>
            <person name="Ruan Y."/>
            <person name="Salzberg S.L."/>
            <person name="Sandelin A."/>
            <person name="Schneider C."/>
            <person name="Schoenbach C."/>
            <person name="Sekiguchi K."/>
            <person name="Semple C.A."/>
            <person name="Seno S."/>
            <person name="Sessa L."/>
            <person name="Sheng Y."/>
            <person name="Shibata Y."/>
            <person name="Shimada H."/>
            <person name="Shimada K."/>
            <person name="Silva D."/>
            <person name="Sinclair B."/>
            <person name="Sperling S."/>
            <person name="Stupka E."/>
            <person name="Sugiura K."/>
            <person name="Sultana R."/>
            <person name="Takenaka Y."/>
            <person name="Taki K."/>
            <person name="Tammoja K."/>
            <person name="Tan S.L."/>
            <person name="Tang S."/>
            <person name="Taylor M.S."/>
            <person name="Tegner J."/>
            <person name="Teichmann S.A."/>
            <person name="Ueda H.R."/>
            <person name="van Nimwegen E."/>
            <person name="Verardo R."/>
            <person name="Wei C.L."/>
            <person name="Yagi K."/>
            <person name="Yamanishi H."/>
            <person name="Zabarovsky E."/>
            <person name="Zhu S."/>
            <person name="Zimmer A."/>
            <person name="Hide W."/>
            <person name="Bult C."/>
            <person name="Grimmond S.M."/>
            <person name="Teasdale R.D."/>
            <person name="Liu E.T."/>
            <person name="Brusic V."/>
            <person name="Quackenbush J."/>
            <person name="Wahlestedt C."/>
            <person name="Mattick J.S."/>
            <person name="Hume D.A."/>
            <person name="Kai C."/>
            <person name="Sasaki D."/>
            <person name="Tomaru Y."/>
            <person name="Fukuda S."/>
            <person name="Kanamori-Katayama M."/>
            <person name="Suzuki M."/>
            <person name="Aoki J."/>
            <person name="Arakawa T."/>
            <person name="Iida J."/>
            <person name="Imamura K."/>
            <person name="Itoh M."/>
            <person name="Kato T."/>
            <person name="Kawaji H."/>
            <person name="Kawagashira N."/>
            <person name="Kawashima T."/>
            <person name="Kojima M."/>
            <person name="Kondo S."/>
            <person name="Konno H."/>
            <person name="Nakano K."/>
            <person name="Ninomiya N."/>
            <person name="Nishio T."/>
            <person name="Okada M."/>
            <person name="Plessy C."/>
            <person name="Shibata K."/>
            <person name="Shiraki T."/>
            <person name="Suzuki S."/>
            <person name="Tagami M."/>
            <person name="Waki K."/>
            <person name="Watahiki A."/>
            <person name="Okamura-Oho Y."/>
            <person name="Suzuki H."/>
            <person name="Kawai J."/>
            <person name="Hayashizaki Y."/>
        </authorList>
    </citation>
    <scope>NUCLEOTIDE SEQUENCE [LARGE SCALE MRNA] (ISOFORMS 1 AND 2)</scope>
    <source>
        <strain>C57BL/6J</strain>
        <tissue>Heart</tissue>
    </source>
</reference>
<reference key="3">
    <citation type="journal article" date="2004" name="Genome Res.">
        <title>The status, quality, and expansion of the NIH full-length cDNA project: the Mammalian Gene Collection (MGC).</title>
        <authorList>
            <consortium name="The MGC Project Team"/>
        </authorList>
    </citation>
    <scope>NUCLEOTIDE SEQUENCE [LARGE SCALE MRNA] (ISOFORM 1)</scope>
    <source>
        <strain>FVB/N</strain>
        <tissue>Mammary tumor</tissue>
    </source>
</reference>
<reference key="4">
    <citation type="journal article" date="2007" name="Proc. Natl. Acad. Sci. U.S.A.">
        <title>Large-scale phosphorylation analysis of mouse liver.</title>
        <authorList>
            <person name="Villen J."/>
            <person name="Beausoleil S.A."/>
            <person name="Gerber S.A."/>
            <person name="Gygi S.P."/>
        </authorList>
    </citation>
    <scope>IDENTIFICATION BY MASS SPECTROMETRY [LARGE SCALE ANALYSIS]</scope>
    <source>
        <tissue>Liver</tissue>
    </source>
</reference>
<reference key="5">
    <citation type="journal article" date="2010" name="Cell">
        <title>A tissue-specific atlas of mouse protein phosphorylation and expression.</title>
        <authorList>
            <person name="Huttlin E.L."/>
            <person name="Jedrychowski M.P."/>
            <person name="Elias J.E."/>
            <person name="Goswami T."/>
            <person name="Rad R."/>
            <person name="Beausoleil S.A."/>
            <person name="Villen J."/>
            <person name="Haas W."/>
            <person name="Sowa M.E."/>
            <person name="Gygi S.P."/>
        </authorList>
    </citation>
    <scope>PHOSPHORYLATION [LARGE SCALE ANALYSIS] AT SER-89</scope>
    <scope>IDENTIFICATION BY MASS SPECTROMETRY [LARGE SCALE ANALYSIS]</scope>
    <source>
        <tissue>Brown adipose tissue</tissue>
        <tissue>Heart</tissue>
        <tissue>Kidney</tissue>
        <tissue>Lung</tissue>
    </source>
</reference>
<reference key="6">
    <citation type="journal article" date="2010" name="Dev. Cell">
        <title>The Crumbs complex couples cell density sensing to Hippo-dependent control of the TGF-beta-SMAD pathway.</title>
        <authorList>
            <person name="Varelas X."/>
            <person name="Samavarchi-Tehrani P."/>
            <person name="Narimatsu M."/>
            <person name="Weiss A."/>
            <person name="Cockburn K."/>
            <person name="Larsen B.G."/>
            <person name="Rossant J."/>
            <person name="Wrana J.L."/>
        </authorList>
    </citation>
    <scope>FUNCTION</scope>
    <scope>INTERACTION WITH PALS1; LATS1 AND YAP1</scope>
    <scope>SUBCELLULAR LOCATION</scope>
</reference>
<reference key="7">
    <citation type="journal article" date="2023" name="Int. J. Biol. Sci.">
        <title>The deubiquitinase UCHL1 negatively controls osteoclastogenesis by regulating TAZ/NFATC1 signalling.</title>
        <authorList>
            <person name="Feng Z."/>
            <person name="Tao S."/>
            <person name="Huang Z."/>
            <person name="Zheng B."/>
            <person name="Kong X."/>
            <person name="Xiang Y."/>
            <person name="Zhang Q."/>
            <person name="Song H."/>
            <person name="Xu Z."/>
            <person name="Wei X."/>
            <person name="Zhao F."/>
            <person name="Chen J."/>
        </authorList>
    </citation>
    <scope>FUNCTION</scope>
    <scope>UBIQUITINATION AT LYS-46</scope>
    <scope>DEUBIQUITINATION AT LYS-46 BY UCHL1</scope>
</reference>
<comment type="function">
    <text evidence="3 7 8 9">Transcriptional coactivator which acts as a downstream regulatory target in the Hippo signaling pathway that plays a pivotal role in organ size control and tumor suppression by restricting proliferation and promoting apoptosis (PubMed:11118213, PubMed:37215988). The core of this pathway is composed of a kinase cascade wherein STK3/MST2 and STK4/MST1, in complex with its regulatory protein SAV1, phosphorylates and activates LATS1/2 in complex with its regulatory protein MOB1, which in turn phosphorylates and inactivates YAP1 oncoprotein and WWTR1/TAZ (By similarity). WWTR1 enhances PAX8 and NKX2-1/TTF1-dependent gene activation (By similarity). In conjunction with YAP1, involved in the regulation of TGFB1-dependent SMAD2 and SMAD3 nuclear accumulation (PubMed:21145499). Plays a key role in coupling SMADs to the transcriptional machinery such as the mediator complex (By similarity). Regulates embryonic stem-cell self-renewal, promotes cell proliferation and epithelial-mesenchymal transition (By similarity).</text>
</comment>
<comment type="subunit">
    <text evidence="3 7 8">Binds to SLC9A3R2 via the PDZ motif at the plasma membrane (PubMed:11118213). Binds to YWHAZ in vivo and in vitro through the phosphoserine-binding motif RSHSSP (PubMed:11118213). Interacts (via coiled-coil domain) with SMAD2 (via MH1 domain), SMAD3 and SMAD4 (By similarity). Interacts with MED15 (By similarity). Interacts with PAX8 and NKX2-1 (By similarity). Interacts with TEAD1, TEAD2, TEAD3 and TEAD4 (By similarity). Interacts (via WW domain) with PALS1 (PubMed:21145499). Interacts with LATS1 (PubMed:21145499). Interacts with YAP1 (when phosphorylated at 'Ser-112') (PubMed:21145499). Interacts (via WW domain) with PRRG4 (via cytoplasmic domain) (By similarity). Interacts (via WW domain) with AMOTL2 (via PPXY motif); the interaction promotes WWTR1/TAZ localization to the cytoplasm and tight junctions, thereby inhibiting its transcriptional coactivator properties (By similarity). Interacts (via WW domain) with AMOT; the interaction facilitates translocation of WWTR1/TAZ to the cytoplasm (By similarity).</text>
</comment>
<comment type="interaction">
    <interactant intactId="EBI-1211920">
        <id>Q9EPK5</id>
    </interactant>
    <interactant intactId="EBI-2365912">
        <id>O35625</id>
        <label>Axin1</label>
    </interactant>
    <organismsDiffer>false</organismsDiffer>
    <experiments>4</experiments>
</comment>
<comment type="interaction">
    <interactant intactId="EBI-1211920">
        <id>Q9EPK5</id>
    </interactant>
    <interactant intactId="EBI-356265">
        <id>Q8IX12</id>
        <label>CCAR1</label>
    </interactant>
    <organismsDiffer>true</organismsDiffer>
    <experiments>5</experiments>
</comment>
<comment type="interaction">
    <interactant intactId="EBI-1211920">
        <id>Q9EPK5</id>
    </interactant>
    <interactant intactId="EBI-491549">
        <id>P35222</id>
        <label>CTNNB1</label>
    </interactant>
    <organismsDiffer>true</organismsDiffer>
    <experiments>2</experiments>
</comment>
<comment type="interaction">
    <interactant intactId="EBI-1211920">
        <id>Q9EPK5</id>
    </interactant>
    <interactant intactId="EBI-1223127">
        <id>P23441</id>
        <label>Nkx2-1</label>
    </interactant>
    <organismsDiffer>true</organismsDiffer>
    <experiments>3</experiments>
</comment>
<comment type="interaction">
    <interactant intactId="EBI-1211920">
        <id>Q9EPK5</id>
    </interactant>
    <interactant intactId="EBI-79553">
        <id>Q07157</id>
        <label>TJP1</label>
    </interactant>
    <organismsDiffer>true</organismsDiffer>
    <experiments>4</experiments>
</comment>
<comment type="interaction">
    <interactant intactId="EBI-1211920">
        <id>Q9EPK5</id>
    </interactant>
    <interactant intactId="EBI-8304003">
        <id>Q95168</id>
        <label>TJP2</label>
    </interactant>
    <organismsDiffer>true</organismsDiffer>
    <experiments>4</experiments>
</comment>
<comment type="subcellular location">
    <subcellularLocation>
        <location evidence="7 8">Nucleus</location>
    </subcellularLocation>
    <subcellularLocation>
        <location evidence="7 8">Cytoplasm</location>
    </subcellularLocation>
    <subcellularLocation>
        <location evidence="3">Cell membrane</location>
    </subcellularLocation>
    <subcellularLocation>
        <location evidence="2">Cell junction</location>
        <location evidence="2">Tight junction</location>
    </subcellularLocation>
    <text evidence="3 7 8">Concentrates along specific portions of the plasma membrane, and accumulates in punctate nuclear bodies (PubMed:11118213). When phosphorylated is retained in the cytoplasm by YWHAZ (PubMed:11118213). Can be retained in the nucleus by MED15 (By similarity). Localized in the cytoplasm in areas of epithelial cell high density (PubMed:21145499). At blastocyst stage expressed in the nucleus in trophectodermal cells, however expressed in the cytoplasm in the inner cell mass (PubMed:21145499). In the nucleus, phosphorylation by PRP4K induces nuclear exclusion (By similarity). Interaction with AMOTL2 results in localization to the cytoplasm and tight junctions (By similarity).</text>
</comment>
<comment type="alternative products">
    <event type="alternative splicing"/>
    <isoform>
        <id>Q9EPK5-1</id>
        <name>1</name>
        <sequence type="displayed"/>
    </isoform>
    <isoform>
        <id>Q9EPK5-2</id>
        <name>2</name>
        <sequence type="described" ref="VSP_026137"/>
    </isoform>
</comment>
<comment type="tissue specificity">
    <text evidence="7">Highly expressed in kidney, heart, placenta and lung.</text>
</comment>
<comment type="domain">
    <text evidence="7">The PDZ-binding motif is essential for stimulated gene transcription. It localizes the protein into both punctate nuclear foci and plasma membrane-associated complexes.</text>
</comment>
<comment type="domain">
    <text evidence="7">Binds to transcription factors via its WW domain.</text>
</comment>
<comment type="PTM">
    <text evidence="1 7">Phosphorylated by LATS2 and STK3/MST2. Phosphorylation by LATS2 results in creation of 14-3-3 binding sites, retention in the cytoplasm, and functional inactivation (By similarity). Phosphorylation results in the inhibition of transcriptional coactivation through YWHAZ-mediated nuclear export.</text>
</comment>
<comment type="PTM">
    <text evidence="9">Ubiquitinated at Lys-46; leading to proteasomal degradation. Deubiquitinated and stabilized by UCHL1 at Lys-46; leading to inhibition of osteoclastogenesis.</text>
</comment>
<evidence type="ECO:0000250" key="1"/>
<evidence type="ECO:0000250" key="2">
    <source>
        <dbReference type="UniProtKB" id="A0A8I3PQN6"/>
    </source>
</evidence>
<evidence type="ECO:0000250" key="3">
    <source>
        <dbReference type="UniProtKB" id="Q9GZV5"/>
    </source>
</evidence>
<evidence type="ECO:0000255" key="4"/>
<evidence type="ECO:0000255" key="5">
    <source>
        <dbReference type="PROSITE-ProRule" id="PRU00224"/>
    </source>
</evidence>
<evidence type="ECO:0000256" key="6">
    <source>
        <dbReference type="SAM" id="MobiDB-lite"/>
    </source>
</evidence>
<evidence type="ECO:0000269" key="7">
    <source>
    </source>
</evidence>
<evidence type="ECO:0000269" key="8">
    <source>
    </source>
</evidence>
<evidence type="ECO:0000269" key="9">
    <source>
    </source>
</evidence>
<evidence type="ECO:0000303" key="10">
    <source>
    </source>
</evidence>
<evidence type="ECO:0000303" key="11">
    <source>
    </source>
</evidence>
<evidence type="ECO:0000305" key="12"/>
<evidence type="ECO:0000312" key="13">
    <source>
        <dbReference type="MGI" id="MGI:1917649"/>
    </source>
</evidence>
<evidence type="ECO:0007744" key="14">
    <source>
    </source>
</evidence>
<evidence type="ECO:0007829" key="15">
    <source>
        <dbReference type="PDB" id="5GN0"/>
    </source>
</evidence>